<sequence>MTASSPSIRVTDLSYSVAGRELLSKLKFHLQSGEMLAVLGRNGAGKSTLLKHLTGELGKSGVELFGQPLRDIKPAEAAKRRAVLPQQTPLSFAYEVLDVVLLGRIPHGQRETVQDRAIAAACLERVGLSGYETRDVLTLSGGEQQRVHFARTLAQLHGVIGERVLLLDEPTASLDLAHQHATLRLARELCREGVGVLAVLHDLNLAAQYADRVLMLAEGHVIACDHPAVALTPESIRTAYGHEVLVTQHPCLNCPLIVSAS</sequence>
<comment type="function">
    <text evidence="1">Part of the ABC transporter complex HmuTUV involved in hemin import. Responsible for energy coupling to the transport system.</text>
</comment>
<comment type="subunit">
    <text evidence="1">The complex is composed of two ATP-binding proteins (HmuV), two transmembrane proteins (HmuU) and a solute-binding protein (HmuT).</text>
</comment>
<comment type="subcellular location">
    <subcellularLocation>
        <location evidence="1">Cell membrane</location>
        <topology evidence="1">Peripheral membrane protein</topology>
    </subcellularLocation>
</comment>
<comment type="similarity">
    <text evidence="1">Belongs to the ABC transporter superfamily. Heme (hemin) importer (TC 3.A.1.14.5) family.</text>
</comment>
<accession>Q9RZU5</accession>
<evidence type="ECO:0000255" key="1">
    <source>
        <dbReference type="HAMAP-Rule" id="MF_01718"/>
    </source>
</evidence>
<organism>
    <name type="scientific">Deinococcus radiodurans (strain ATCC 13939 / DSM 20539 / JCM 16871 / CCUG 27074 / LMG 4051 / NBRC 15346 / NCIMB 9279 / VKM B-1422 / R1)</name>
    <dbReference type="NCBI Taxonomy" id="243230"/>
    <lineage>
        <taxon>Bacteria</taxon>
        <taxon>Thermotogati</taxon>
        <taxon>Deinococcota</taxon>
        <taxon>Deinococci</taxon>
        <taxon>Deinococcales</taxon>
        <taxon>Deinococcaceae</taxon>
        <taxon>Deinococcus</taxon>
    </lineage>
</organism>
<feature type="chain" id="PRO_0000269588" description="Hemin import ATP-binding protein HmuV">
    <location>
        <begin position="1"/>
        <end position="261"/>
    </location>
</feature>
<feature type="domain" description="ABC transporter" evidence="1">
    <location>
        <begin position="8"/>
        <end position="243"/>
    </location>
</feature>
<feature type="binding site" evidence="1">
    <location>
        <begin position="40"/>
        <end position="47"/>
    </location>
    <ligand>
        <name>ATP</name>
        <dbReference type="ChEBI" id="CHEBI:30616"/>
    </ligand>
</feature>
<reference key="1">
    <citation type="journal article" date="1999" name="Science">
        <title>Genome sequence of the radioresistant bacterium Deinococcus radiodurans R1.</title>
        <authorList>
            <person name="White O."/>
            <person name="Eisen J.A."/>
            <person name="Heidelberg J.F."/>
            <person name="Hickey E.K."/>
            <person name="Peterson J.D."/>
            <person name="Dodson R.J."/>
            <person name="Haft D.H."/>
            <person name="Gwinn M.L."/>
            <person name="Nelson W.C."/>
            <person name="Richardson D.L."/>
            <person name="Moffat K.S."/>
            <person name="Qin H."/>
            <person name="Jiang L."/>
            <person name="Pamphile W."/>
            <person name="Crosby M."/>
            <person name="Shen M."/>
            <person name="Vamathevan J.J."/>
            <person name="Lam P."/>
            <person name="McDonald L.A."/>
            <person name="Utterback T.R."/>
            <person name="Zalewski C."/>
            <person name="Makarova K.S."/>
            <person name="Aravind L."/>
            <person name="Daly M.J."/>
            <person name="Minton K.W."/>
            <person name="Fleischmann R.D."/>
            <person name="Ketchum K.A."/>
            <person name="Nelson K.E."/>
            <person name="Salzberg S.L."/>
            <person name="Smith H.O."/>
            <person name="Venter J.C."/>
            <person name="Fraser C.M."/>
        </authorList>
    </citation>
    <scope>NUCLEOTIDE SEQUENCE [LARGE SCALE GENOMIC DNA]</scope>
    <source>
        <strain>ATCC 13939 / DSM 20539 / JCM 16871 / CCUG 27074 / LMG 4051 / NBRC 15346 / NCIMB 9279 / VKM B-1422 / R1</strain>
    </source>
</reference>
<dbReference type="EC" id="7.6.2.-" evidence="1"/>
<dbReference type="EMBL" id="AE001826">
    <property type="protein sequence ID" value="AAF12577.1"/>
    <property type="molecule type" value="Genomic_DNA"/>
</dbReference>
<dbReference type="PIR" id="H75619">
    <property type="entry name" value="H75619"/>
</dbReference>
<dbReference type="RefSeq" id="NP_051559.1">
    <property type="nucleotide sequence ID" value="NC_000958.1"/>
</dbReference>
<dbReference type="RefSeq" id="WP_010883994.1">
    <property type="nucleotide sequence ID" value="NC_000958.1"/>
</dbReference>
<dbReference type="SMR" id="Q9RZU5"/>
<dbReference type="EnsemblBacteria" id="AAF12577">
    <property type="protein sequence ID" value="AAF12577"/>
    <property type="gene ID" value="DR_B0016"/>
</dbReference>
<dbReference type="GeneID" id="69519269"/>
<dbReference type="KEGG" id="dra:DR_B0016"/>
<dbReference type="PATRIC" id="fig|243230.17.peg.14"/>
<dbReference type="HOGENOM" id="CLU_000604_1_11_0"/>
<dbReference type="InParanoid" id="Q9RZU5"/>
<dbReference type="OrthoDB" id="9799337at2"/>
<dbReference type="Proteomes" id="UP000002524">
    <property type="component" value="Plasmid MP1"/>
</dbReference>
<dbReference type="GO" id="GO:0005886">
    <property type="term" value="C:plasma membrane"/>
    <property type="evidence" value="ECO:0007669"/>
    <property type="project" value="UniProtKB-SubCell"/>
</dbReference>
<dbReference type="GO" id="GO:0005524">
    <property type="term" value="F:ATP binding"/>
    <property type="evidence" value="ECO:0007669"/>
    <property type="project" value="UniProtKB-KW"/>
</dbReference>
<dbReference type="GO" id="GO:0016887">
    <property type="term" value="F:ATP hydrolysis activity"/>
    <property type="evidence" value="ECO:0007669"/>
    <property type="project" value="InterPro"/>
</dbReference>
<dbReference type="CDD" id="cd03214">
    <property type="entry name" value="ABC_Iron-Siderophores_B12_Hemin"/>
    <property type="match status" value="1"/>
</dbReference>
<dbReference type="Gene3D" id="3.40.50.300">
    <property type="entry name" value="P-loop containing nucleotide triphosphate hydrolases"/>
    <property type="match status" value="1"/>
</dbReference>
<dbReference type="InterPro" id="IPR003593">
    <property type="entry name" value="AAA+_ATPase"/>
</dbReference>
<dbReference type="InterPro" id="IPR003439">
    <property type="entry name" value="ABC_transporter-like_ATP-bd"/>
</dbReference>
<dbReference type="InterPro" id="IPR027417">
    <property type="entry name" value="P-loop_NTPase"/>
</dbReference>
<dbReference type="NCBIfam" id="NF010068">
    <property type="entry name" value="PRK13548.1"/>
    <property type="match status" value="1"/>
</dbReference>
<dbReference type="PANTHER" id="PTHR42794">
    <property type="entry name" value="HEMIN IMPORT ATP-BINDING PROTEIN HMUV"/>
    <property type="match status" value="1"/>
</dbReference>
<dbReference type="PANTHER" id="PTHR42794:SF1">
    <property type="entry name" value="HEMIN IMPORT ATP-BINDING PROTEIN HMUV"/>
    <property type="match status" value="1"/>
</dbReference>
<dbReference type="Pfam" id="PF00005">
    <property type="entry name" value="ABC_tran"/>
    <property type="match status" value="1"/>
</dbReference>
<dbReference type="SMART" id="SM00382">
    <property type="entry name" value="AAA"/>
    <property type="match status" value="1"/>
</dbReference>
<dbReference type="SUPFAM" id="SSF52540">
    <property type="entry name" value="P-loop containing nucleoside triphosphate hydrolases"/>
    <property type="match status" value="1"/>
</dbReference>
<dbReference type="PROSITE" id="PS50893">
    <property type="entry name" value="ABC_TRANSPORTER_2"/>
    <property type="match status" value="1"/>
</dbReference>
<dbReference type="PROSITE" id="PS51261">
    <property type="entry name" value="HMUV"/>
    <property type="match status" value="1"/>
</dbReference>
<name>HMUV_DEIRA</name>
<gene>
    <name evidence="1" type="primary">hmuV</name>
    <name type="ordered locus">DR_B0016</name>
</gene>
<protein>
    <recommendedName>
        <fullName evidence="1">Hemin import ATP-binding protein HmuV</fullName>
        <ecNumber evidence="1">7.6.2.-</ecNumber>
    </recommendedName>
</protein>
<keyword id="KW-0067">ATP-binding</keyword>
<keyword id="KW-1003">Cell membrane</keyword>
<keyword id="KW-0472">Membrane</keyword>
<keyword id="KW-0547">Nucleotide-binding</keyword>
<keyword id="KW-0614">Plasmid</keyword>
<keyword id="KW-1185">Reference proteome</keyword>
<keyword id="KW-1278">Translocase</keyword>
<keyword id="KW-0813">Transport</keyword>
<proteinExistence type="inferred from homology"/>
<geneLocation type="plasmid">
    <name>megaplasmid MP1</name>
</geneLocation>